<organism>
    <name type="scientific">Nocardioides sp. (strain ATCC BAA-499 / JS614)</name>
    <dbReference type="NCBI Taxonomy" id="196162"/>
    <lineage>
        <taxon>Bacteria</taxon>
        <taxon>Bacillati</taxon>
        <taxon>Actinomycetota</taxon>
        <taxon>Actinomycetes</taxon>
        <taxon>Propionibacteriales</taxon>
        <taxon>Nocardioidaceae</taxon>
        <taxon>Nocardioides</taxon>
    </lineage>
</organism>
<comment type="function">
    <text evidence="1">One of two assembly initiator proteins, it binds directly to the 5'-end of the 23S rRNA, where it nucleates assembly of the 50S subunit.</text>
</comment>
<comment type="function">
    <text evidence="1">One of the proteins that surrounds the polypeptide exit tunnel on the outside of the subunit.</text>
</comment>
<comment type="subunit">
    <text evidence="1">Part of the 50S ribosomal subunit.</text>
</comment>
<comment type="similarity">
    <text evidence="1">Belongs to the universal ribosomal protein uL24 family.</text>
</comment>
<reference key="1">
    <citation type="submission" date="2006-12" db="EMBL/GenBank/DDBJ databases">
        <title>Complete sequence of chromosome 1 of Nocardioides sp. JS614.</title>
        <authorList>
            <person name="Copeland A."/>
            <person name="Lucas S."/>
            <person name="Lapidus A."/>
            <person name="Barry K."/>
            <person name="Detter J.C."/>
            <person name="Glavina del Rio T."/>
            <person name="Hammon N."/>
            <person name="Israni S."/>
            <person name="Dalin E."/>
            <person name="Tice H."/>
            <person name="Pitluck S."/>
            <person name="Thompson L.S."/>
            <person name="Brettin T."/>
            <person name="Bruce D."/>
            <person name="Han C."/>
            <person name="Tapia R."/>
            <person name="Schmutz J."/>
            <person name="Larimer F."/>
            <person name="Land M."/>
            <person name="Hauser L."/>
            <person name="Kyrpides N."/>
            <person name="Kim E."/>
            <person name="Mattes T."/>
            <person name="Gossett J."/>
            <person name="Richardson P."/>
        </authorList>
    </citation>
    <scope>NUCLEOTIDE SEQUENCE [LARGE SCALE GENOMIC DNA]</scope>
    <source>
        <strain>ATCC BAA-499 / JS614</strain>
    </source>
</reference>
<keyword id="KW-1185">Reference proteome</keyword>
<keyword id="KW-0687">Ribonucleoprotein</keyword>
<keyword id="KW-0689">Ribosomal protein</keyword>
<keyword id="KW-0694">RNA-binding</keyword>
<keyword id="KW-0699">rRNA-binding</keyword>
<name>RL24_NOCSJ</name>
<dbReference type="EMBL" id="CP000509">
    <property type="protein sequence ID" value="ABL83392.1"/>
    <property type="molecule type" value="Genomic_DNA"/>
</dbReference>
<dbReference type="RefSeq" id="WP_011757323.1">
    <property type="nucleotide sequence ID" value="NC_008699.1"/>
</dbReference>
<dbReference type="SMR" id="A1SNK7"/>
<dbReference type="STRING" id="196162.Noca_3894"/>
<dbReference type="KEGG" id="nca:Noca_3894"/>
<dbReference type="eggNOG" id="COG0198">
    <property type="taxonomic scope" value="Bacteria"/>
</dbReference>
<dbReference type="HOGENOM" id="CLU_093315_2_3_11"/>
<dbReference type="Proteomes" id="UP000000640">
    <property type="component" value="Chromosome"/>
</dbReference>
<dbReference type="GO" id="GO:1990904">
    <property type="term" value="C:ribonucleoprotein complex"/>
    <property type="evidence" value="ECO:0007669"/>
    <property type="project" value="UniProtKB-KW"/>
</dbReference>
<dbReference type="GO" id="GO:0005840">
    <property type="term" value="C:ribosome"/>
    <property type="evidence" value="ECO:0007669"/>
    <property type="project" value="UniProtKB-KW"/>
</dbReference>
<dbReference type="GO" id="GO:0019843">
    <property type="term" value="F:rRNA binding"/>
    <property type="evidence" value="ECO:0007669"/>
    <property type="project" value="UniProtKB-UniRule"/>
</dbReference>
<dbReference type="GO" id="GO:0003735">
    <property type="term" value="F:structural constituent of ribosome"/>
    <property type="evidence" value="ECO:0007669"/>
    <property type="project" value="InterPro"/>
</dbReference>
<dbReference type="GO" id="GO:0006412">
    <property type="term" value="P:translation"/>
    <property type="evidence" value="ECO:0007669"/>
    <property type="project" value="UniProtKB-UniRule"/>
</dbReference>
<dbReference type="CDD" id="cd06089">
    <property type="entry name" value="KOW_RPL26"/>
    <property type="match status" value="1"/>
</dbReference>
<dbReference type="Gene3D" id="2.30.30.30">
    <property type="match status" value="1"/>
</dbReference>
<dbReference type="HAMAP" id="MF_01326_B">
    <property type="entry name" value="Ribosomal_uL24_B"/>
    <property type="match status" value="1"/>
</dbReference>
<dbReference type="InterPro" id="IPR005824">
    <property type="entry name" value="KOW"/>
</dbReference>
<dbReference type="InterPro" id="IPR014722">
    <property type="entry name" value="Rib_uL2_dom2"/>
</dbReference>
<dbReference type="InterPro" id="IPR003256">
    <property type="entry name" value="Ribosomal_uL24"/>
</dbReference>
<dbReference type="InterPro" id="IPR005825">
    <property type="entry name" value="Ribosomal_uL24_CS"/>
</dbReference>
<dbReference type="InterPro" id="IPR041988">
    <property type="entry name" value="Ribosomal_uL24_KOW"/>
</dbReference>
<dbReference type="InterPro" id="IPR008991">
    <property type="entry name" value="Translation_prot_SH3-like_sf"/>
</dbReference>
<dbReference type="NCBIfam" id="TIGR01079">
    <property type="entry name" value="rplX_bact"/>
    <property type="match status" value="1"/>
</dbReference>
<dbReference type="PANTHER" id="PTHR12903">
    <property type="entry name" value="MITOCHONDRIAL RIBOSOMAL PROTEIN L24"/>
    <property type="match status" value="1"/>
</dbReference>
<dbReference type="Pfam" id="PF00467">
    <property type="entry name" value="KOW"/>
    <property type="match status" value="1"/>
</dbReference>
<dbReference type="Pfam" id="PF17136">
    <property type="entry name" value="ribosomal_L24"/>
    <property type="match status" value="1"/>
</dbReference>
<dbReference type="SMART" id="SM00739">
    <property type="entry name" value="KOW"/>
    <property type="match status" value="1"/>
</dbReference>
<dbReference type="SUPFAM" id="SSF50104">
    <property type="entry name" value="Translation proteins SH3-like domain"/>
    <property type="match status" value="1"/>
</dbReference>
<dbReference type="PROSITE" id="PS01108">
    <property type="entry name" value="RIBOSOMAL_L24"/>
    <property type="match status" value="1"/>
</dbReference>
<feature type="chain" id="PRO_0000355700" description="Large ribosomal subunit protein uL24">
    <location>
        <begin position="1"/>
        <end position="123"/>
    </location>
</feature>
<feature type="region of interest" description="Disordered" evidence="2">
    <location>
        <begin position="100"/>
        <end position="123"/>
    </location>
</feature>
<protein>
    <recommendedName>
        <fullName evidence="1">Large ribosomal subunit protein uL24</fullName>
    </recommendedName>
    <alternativeName>
        <fullName evidence="3">50S ribosomal protein L24</fullName>
    </alternativeName>
</protein>
<gene>
    <name evidence="1" type="primary">rplX</name>
    <name type="ordered locus">Noca_3894</name>
</gene>
<sequence>MAEKKKSVSIKKGDTVKVIAGKDKGAEGRVIQVLREEQRVIVEGVNRVKRHTKVVNQGGRAGTTGGIITAEAPIHVSNVMLVEGGGVTRIGFRRDEVTKRRPDGSTYKAERSVRISRKTGKEI</sequence>
<proteinExistence type="inferred from homology"/>
<accession>A1SNK7</accession>
<evidence type="ECO:0000255" key="1">
    <source>
        <dbReference type="HAMAP-Rule" id="MF_01326"/>
    </source>
</evidence>
<evidence type="ECO:0000256" key="2">
    <source>
        <dbReference type="SAM" id="MobiDB-lite"/>
    </source>
</evidence>
<evidence type="ECO:0000305" key="3"/>